<comment type="function">
    <text evidence="4 5 8">Involved in pre-mRNA splicing as component of the activated spliceosome. As a component of the minor spliceosome, involved in the splicing of U12-type introns in pre-mRNAs (Probable).</text>
</comment>
<comment type="subunit">
    <text evidence="4 5 6">Part of the activated spliceosome B/catalytic step 1 spliceosome, one of the forms of the spliceosome which has a well-formed active site but still cannot catalyze the branching reaction and is composed of at least 52 proteins, the U2, U5 and U6 snRNAs and the pre-mRNA. Component of the minor spliceosome, which splices U12-type introns (PubMed:33509932).</text>
</comment>
<comment type="interaction">
    <interactant intactId="EBI-7704044">
        <id>Q9Y388</id>
    </interactant>
    <interactant intactId="EBI-2561235">
        <id>Q9BRD0</id>
        <label>BUD13</label>
    </interactant>
    <organismsDiffer>false</organismsDiffer>
    <experiments>5</experiments>
</comment>
<comment type="interaction">
    <interactant intactId="EBI-7704044">
        <id>Q9Y388</id>
    </interactant>
    <interactant intactId="EBI-10268158">
        <id>Q8N9E0</id>
        <label>FAM133A</label>
    </interactant>
    <organismsDiffer>false</organismsDiffer>
    <experiments>3</experiments>
</comment>
<comment type="interaction">
    <interactant intactId="EBI-7704044">
        <id>Q9Y388</id>
    </interactant>
    <interactant intactId="EBI-742459">
        <id>Q9BU76</id>
        <label>MMTAG2</label>
    </interactant>
    <organismsDiffer>false</organismsDiffer>
    <experiments>3</experiments>
</comment>
<comment type="interaction">
    <interactant intactId="EBI-7704044">
        <id>Q9Y388</id>
    </interactant>
    <interactant intactId="EBI-721539">
        <id>Q8N5F7</id>
        <label>NKAP</label>
    </interactant>
    <organismsDiffer>false</organismsDiffer>
    <experiments>2</experiments>
</comment>
<comment type="interaction">
    <interactant intactId="EBI-7704044">
        <id>Q9Y388</id>
    </interactant>
    <interactant intactId="EBI-3867173">
        <id>A7MD48</id>
        <label>SRRM4</label>
    </interactant>
    <organismsDiffer>false</organismsDiffer>
    <experiments>3</experiments>
</comment>
<comment type="subcellular location">
    <subcellularLocation>
        <location evidence="4 5">Nucleus</location>
    </subcellularLocation>
</comment>
<comment type="similarity">
    <text evidence="7">Belongs to the IST3 family.</text>
</comment>
<name>RBMX2_HUMAN</name>
<gene>
    <name type="primary">RBMX2</name>
    <name type="ORF">CGI-79</name>
</gene>
<protein>
    <recommendedName>
        <fullName>RNA-binding motif protein, X-linked 2</fullName>
    </recommendedName>
</protein>
<accession>Q9Y388</accession>
<accession>A8K9Z0</accession>
<accession>Q5JY82</accession>
<accession>Q9Y3I8</accession>
<sequence length="322" mass="37336">MNPLTKVKLINELNEREVQLGVADKVSWHSEYKDSAWIFLGGLPYELTEGDIICVFSQYGEIVNINLVRDKKTGKSKGFCFLCYEDQRSTILAVDNFNGIKIKGRTIRVDHVSNYRAPKDSEEIDDVTRQLQEKGCGARTPSPSLSESSEDEKPTKKHKKDKKEKKKKKKEKEKADREVQAEQPSSSSPRRKTVKEKDDTGPKKHSSKNSERAQKSEPREGQKLPKSRTAYSGGAEDLERELKKEKPKHEHKSSSRREAREEKTRIRDRGRSSDAHSSWYNGRSEGRSYRSRSRSRDKSHRHKRARRSRERESSNPSDRWRH</sequence>
<reference key="1">
    <citation type="journal article" date="2000" name="Genome Res.">
        <title>Identification of novel human genes evolutionarily conserved in Caenorhabditis elegans by comparative proteomics.</title>
        <authorList>
            <person name="Lai C.-H."/>
            <person name="Chou C.-Y."/>
            <person name="Ch'ang L.-Y."/>
            <person name="Liu C.-S."/>
            <person name="Lin W.-C."/>
        </authorList>
    </citation>
    <scope>NUCLEOTIDE SEQUENCE [LARGE SCALE MRNA]</scope>
</reference>
<reference key="2">
    <citation type="submission" date="1999-05" db="EMBL/GenBank/DDBJ databases">
        <authorList>
            <person name="Rhodes S."/>
        </authorList>
    </citation>
    <scope>NUCLEOTIDE SEQUENCE [MRNA]</scope>
</reference>
<reference key="3">
    <citation type="journal article" date="2004" name="Nat. Genet.">
        <title>Complete sequencing and characterization of 21,243 full-length human cDNAs.</title>
        <authorList>
            <person name="Ota T."/>
            <person name="Suzuki Y."/>
            <person name="Nishikawa T."/>
            <person name="Otsuki T."/>
            <person name="Sugiyama T."/>
            <person name="Irie R."/>
            <person name="Wakamatsu A."/>
            <person name="Hayashi K."/>
            <person name="Sato H."/>
            <person name="Nagai K."/>
            <person name="Kimura K."/>
            <person name="Makita H."/>
            <person name="Sekine M."/>
            <person name="Obayashi M."/>
            <person name="Nishi T."/>
            <person name="Shibahara T."/>
            <person name="Tanaka T."/>
            <person name="Ishii S."/>
            <person name="Yamamoto J."/>
            <person name="Saito K."/>
            <person name="Kawai Y."/>
            <person name="Isono Y."/>
            <person name="Nakamura Y."/>
            <person name="Nagahari K."/>
            <person name="Murakami K."/>
            <person name="Yasuda T."/>
            <person name="Iwayanagi T."/>
            <person name="Wagatsuma M."/>
            <person name="Shiratori A."/>
            <person name="Sudo H."/>
            <person name="Hosoiri T."/>
            <person name="Kaku Y."/>
            <person name="Kodaira H."/>
            <person name="Kondo H."/>
            <person name="Sugawara M."/>
            <person name="Takahashi M."/>
            <person name="Kanda K."/>
            <person name="Yokoi T."/>
            <person name="Furuya T."/>
            <person name="Kikkawa E."/>
            <person name="Omura Y."/>
            <person name="Abe K."/>
            <person name="Kamihara K."/>
            <person name="Katsuta N."/>
            <person name="Sato K."/>
            <person name="Tanikawa M."/>
            <person name="Yamazaki M."/>
            <person name="Ninomiya K."/>
            <person name="Ishibashi T."/>
            <person name="Yamashita H."/>
            <person name="Murakawa K."/>
            <person name="Fujimori K."/>
            <person name="Tanai H."/>
            <person name="Kimata M."/>
            <person name="Watanabe M."/>
            <person name="Hiraoka S."/>
            <person name="Chiba Y."/>
            <person name="Ishida S."/>
            <person name="Ono Y."/>
            <person name="Takiguchi S."/>
            <person name="Watanabe S."/>
            <person name="Yosida M."/>
            <person name="Hotuta T."/>
            <person name="Kusano J."/>
            <person name="Kanehori K."/>
            <person name="Takahashi-Fujii A."/>
            <person name="Hara H."/>
            <person name="Tanase T.-O."/>
            <person name="Nomura Y."/>
            <person name="Togiya S."/>
            <person name="Komai F."/>
            <person name="Hara R."/>
            <person name="Takeuchi K."/>
            <person name="Arita M."/>
            <person name="Imose N."/>
            <person name="Musashino K."/>
            <person name="Yuuki H."/>
            <person name="Oshima A."/>
            <person name="Sasaki N."/>
            <person name="Aotsuka S."/>
            <person name="Yoshikawa Y."/>
            <person name="Matsunawa H."/>
            <person name="Ichihara T."/>
            <person name="Shiohata N."/>
            <person name="Sano S."/>
            <person name="Moriya S."/>
            <person name="Momiyama H."/>
            <person name="Satoh N."/>
            <person name="Takami S."/>
            <person name="Terashima Y."/>
            <person name="Suzuki O."/>
            <person name="Nakagawa S."/>
            <person name="Senoh A."/>
            <person name="Mizoguchi H."/>
            <person name="Goto Y."/>
            <person name="Shimizu F."/>
            <person name="Wakebe H."/>
            <person name="Hishigaki H."/>
            <person name="Watanabe T."/>
            <person name="Sugiyama A."/>
            <person name="Takemoto M."/>
            <person name="Kawakami B."/>
            <person name="Yamazaki M."/>
            <person name="Watanabe K."/>
            <person name="Kumagai A."/>
            <person name="Itakura S."/>
            <person name="Fukuzumi Y."/>
            <person name="Fujimori Y."/>
            <person name="Komiyama M."/>
            <person name="Tashiro H."/>
            <person name="Tanigami A."/>
            <person name="Fujiwara T."/>
            <person name="Ono T."/>
            <person name="Yamada K."/>
            <person name="Fujii Y."/>
            <person name="Ozaki K."/>
            <person name="Hirao M."/>
            <person name="Ohmori Y."/>
            <person name="Kawabata A."/>
            <person name="Hikiji T."/>
            <person name="Kobatake N."/>
            <person name="Inagaki H."/>
            <person name="Ikema Y."/>
            <person name="Okamoto S."/>
            <person name="Okitani R."/>
            <person name="Kawakami T."/>
            <person name="Noguchi S."/>
            <person name="Itoh T."/>
            <person name="Shigeta K."/>
            <person name="Senba T."/>
            <person name="Matsumura K."/>
            <person name="Nakajima Y."/>
            <person name="Mizuno T."/>
            <person name="Morinaga M."/>
            <person name="Sasaki M."/>
            <person name="Togashi T."/>
            <person name="Oyama M."/>
            <person name="Hata H."/>
            <person name="Watanabe M."/>
            <person name="Komatsu T."/>
            <person name="Mizushima-Sugano J."/>
            <person name="Satoh T."/>
            <person name="Shirai Y."/>
            <person name="Takahashi Y."/>
            <person name="Nakagawa K."/>
            <person name="Okumura K."/>
            <person name="Nagase T."/>
            <person name="Nomura N."/>
            <person name="Kikuchi H."/>
            <person name="Masuho Y."/>
            <person name="Yamashita R."/>
            <person name="Nakai K."/>
            <person name="Yada T."/>
            <person name="Nakamura Y."/>
            <person name="Ohara O."/>
            <person name="Isogai T."/>
            <person name="Sugano S."/>
        </authorList>
    </citation>
    <scope>NUCLEOTIDE SEQUENCE [LARGE SCALE MRNA]</scope>
    <source>
        <tissue>Trachea</tissue>
    </source>
</reference>
<reference key="4">
    <citation type="journal article" date="2005" name="Nature">
        <title>The DNA sequence of the human X chromosome.</title>
        <authorList>
            <person name="Ross M.T."/>
            <person name="Grafham D.V."/>
            <person name="Coffey A.J."/>
            <person name="Scherer S."/>
            <person name="McLay K."/>
            <person name="Muzny D."/>
            <person name="Platzer M."/>
            <person name="Howell G.R."/>
            <person name="Burrows C."/>
            <person name="Bird C.P."/>
            <person name="Frankish A."/>
            <person name="Lovell F.L."/>
            <person name="Howe K.L."/>
            <person name="Ashurst J.L."/>
            <person name="Fulton R.S."/>
            <person name="Sudbrak R."/>
            <person name="Wen G."/>
            <person name="Jones M.C."/>
            <person name="Hurles M.E."/>
            <person name="Andrews T.D."/>
            <person name="Scott C.E."/>
            <person name="Searle S."/>
            <person name="Ramser J."/>
            <person name="Whittaker A."/>
            <person name="Deadman R."/>
            <person name="Carter N.P."/>
            <person name="Hunt S.E."/>
            <person name="Chen R."/>
            <person name="Cree A."/>
            <person name="Gunaratne P."/>
            <person name="Havlak P."/>
            <person name="Hodgson A."/>
            <person name="Metzker M.L."/>
            <person name="Richards S."/>
            <person name="Scott G."/>
            <person name="Steffen D."/>
            <person name="Sodergren E."/>
            <person name="Wheeler D.A."/>
            <person name="Worley K.C."/>
            <person name="Ainscough R."/>
            <person name="Ambrose K.D."/>
            <person name="Ansari-Lari M.A."/>
            <person name="Aradhya S."/>
            <person name="Ashwell R.I."/>
            <person name="Babbage A.K."/>
            <person name="Bagguley C.L."/>
            <person name="Ballabio A."/>
            <person name="Banerjee R."/>
            <person name="Barker G.E."/>
            <person name="Barlow K.F."/>
            <person name="Barrett I.P."/>
            <person name="Bates K.N."/>
            <person name="Beare D.M."/>
            <person name="Beasley H."/>
            <person name="Beasley O."/>
            <person name="Beck A."/>
            <person name="Bethel G."/>
            <person name="Blechschmidt K."/>
            <person name="Brady N."/>
            <person name="Bray-Allen S."/>
            <person name="Bridgeman A.M."/>
            <person name="Brown A.J."/>
            <person name="Brown M.J."/>
            <person name="Bonnin D."/>
            <person name="Bruford E.A."/>
            <person name="Buhay C."/>
            <person name="Burch P."/>
            <person name="Burford D."/>
            <person name="Burgess J."/>
            <person name="Burrill W."/>
            <person name="Burton J."/>
            <person name="Bye J.M."/>
            <person name="Carder C."/>
            <person name="Carrel L."/>
            <person name="Chako J."/>
            <person name="Chapman J.C."/>
            <person name="Chavez D."/>
            <person name="Chen E."/>
            <person name="Chen G."/>
            <person name="Chen Y."/>
            <person name="Chen Z."/>
            <person name="Chinault C."/>
            <person name="Ciccodicola A."/>
            <person name="Clark S.Y."/>
            <person name="Clarke G."/>
            <person name="Clee C.M."/>
            <person name="Clegg S."/>
            <person name="Clerc-Blankenburg K."/>
            <person name="Clifford K."/>
            <person name="Cobley V."/>
            <person name="Cole C.G."/>
            <person name="Conquer J.S."/>
            <person name="Corby N."/>
            <person name="Connor R.E."/>
            <person name="David R."/>
            <person name="Davies J."/>
            <person name="Davis C."/>
            <person name="Davis J."/>
            <person name="Delgado O."/>
            <person name="Deshazo D."/>
            <person name="Dhami P."/>
            <person name="Ding Y."/>
            <person name="Dinh H."/>
            <person name="Dodsworth S."/>
            <person name="Draper H."/>
            <person name="Dugan-Rocha S."/>
            <person name="Dunham A."/>
            <person name="Dunn M."/>
            <person name="Durbin K.J."/>
            <person name="Dutta I."/>
            <person name="Eades T."/>
            <person name="Ellwood M."/>
            <person name="Emery-Cohen A."/>
            <person name="Errington H."/>
            <person name="Evans K.L."/>
            <person name="Faulkner L."/>
            <person name="Francis F."/>
            <person name="Frankland J."/>
            <person name="Fraser A.E."/>
            <person name="Galgoczy P."/>
            <person name="Gilbert J."/>
            <person name="Gill R."/>
            <person name="Gloeckner G."/>
            <person name="Gregory S.G."/>
            <person name="Gribble S."/>
            <person name="Griffiths C."/>
            <person name="Grocock R."/>
            <person name="Gu Y."/>
            <person name="Gwilliam R."/>
            <person name="Hamilton C."/>
            <person name="Hart E.A."/>
            <person name="Hawes A."/>
            <person name="Heath P.D."/>
            <person name="Heitmann K."/>
            <person name="Hennig S."/>
            <person name="Hernandez J."/>
            <person name="Hinzmann B."/>
            <person name="Ho S."/>
            <person name="Hoffs M."/>
            <person name="Howden P.J."/>
            <person name="Huckle E.J."/>
            <person name="Hume J."/>
            <person name="Hunt P.J."/>
            <person name="Hunt A.R."/>
            <person name="Isherwood J."/>
            <person name="Jacob L."/>
            <person name="Johnson D."/>
            <person name="Jones S."/>
            <person name="de Jong P.J."/>
            <person name="Joseph S.S."/>
            <person name="Keenan S."/>
            <person name="Kelly S."/>
            <person name="Kershaw J.K."/>
            <person name="Khan Z."/>
            <person name="Kioschis P."/>
            <person name="Klages S."/>
            <person name="Knights A.J."/>
            <person name="Kosiura A."/>
            <person name="Kovar-Smith C."/>
            <person name="Laird G.K."/>
            <person name="Langford C."/>
            <person name="Lawlor S."/>
            <person name="Leversha M."/>
            <person name="Lewis L."/>
            <person name="Liu W."/>
            <person name="Lloyd C."/>
            <person name="Lloyd D.M."/>
            <person name="Loulseged H."/>
            <person name="Loveland J.E."/>
            <person name="Lovell J.D."/>
            <person name="Lozado R."/>
            <person name="Lu J."/>
            <person name="Lyne R."/>
            <person name="Ma J."/>
            <person name="Maheshwari M."/>
            <person name="Matthews L.H."/>
            <person name="McDowall J."/>
            <person name="McLaren S."/>
            <person name="McMurray A."/>
            <person name="Meidl P."/>
            <person name="Meitinger T."/>
            <person name="Milne S."/>
            <person name="Miner G."/>
            <person name="Mistry S.L."/>
            <person name="Morgan M."/>
            <person name="Morris S."/>
            <person name="Mueller I."/>
            <person name="Mullikin J.C."/>
            <person name="Nguyen N."/>
            <person name="Nordsiek G."/>
            <person name="Nyakatura G."/>
            <person name="O'dell C.N."/>
            <person name="Okwuonu G."/>
            <person name="Palmer S."/>
            <person name="Pandian R."/>
            <person name="Parker D."/>
            <person name="Parrish J."/>
            <person name="Pasternak S."/>
            <person name="Patel D."/>
            <person name="Pearce A.V."/>
            <person name="Pearson D.M."/>
            <person name="Pelan S.E."/>
            <person name="Perez L."/>
            <person name="Porter K.M."/>
            <person name="Ramsey Y."/>
            <person name="Reichwald K."/>
            <person name="Rhodes S."/>
            <person name="Ridler K.A."/>
            <person name="Schlessinger D."/>
            <person name="Schueler M.G."/>
            <person name="Sehra H.K."/>
            <person name="Shaw-Smith C."/>
            <person name="Shen H."/>
            <person name="Sheridan E.M."/>
            <person name="Shownkeen R."/>
            <person name="Skuce C.D."/>
            <person name="Smith M.L."/>
            <person name="Sotheran E.C."/>
            <person name="Steingruber H.E."/>
            <person name="Steward C.A."/>
            <person name="Storey R."/>
            <person name="Swann R.M."/>
            <person name="Swarbreck D."/>
            <person name="Tabor P.E."/>
            <person name="Taudien S."/>
            <person name="Taylor T."/>
            <person name="Teague B."/>
            <person name="Thomas K."/>
            <person name="Thorpe A."/>
            <person name="Timms K."/>
            <person name="Tracey A."/>
            <person name="Trevanion S."/>
            <person name="Tromans A.C."/>
            <person name="d'Urso M."/>
            <person name="Verduzco D."/>
            <person name="Villasana D."/>
            <person name="Waldron L."/>
            <person name="Wall M."/>
            <person name="Wang Q."/>
            <person name="Warren J."/>
            <person name="Warry G.L."/>
            <person name="Wei X."/>
            <person name="West A."/>
            <person name="Whitehead S.L."/>
            <person name="Whiteley M.N."/>
            <person name="Wilkinson J.E."/>
            <person name="Willey D.L."/>
            <person name="Williams G."/>
            <person name="Williams L."/>
            <person name="Williamson A."/>
            <person name="Williamson H."/>
            <person name="Wilming L."/>
            <person name="Woodmansey R.L."/>
            <person name="Wray P.W."/>
            <person name="Yen J."/>
            <person name="Zhang J."/>
            <person name="Zhou J."/>
            <person name="Zoghbi H."/>
            <person name="Zorilla S."/>
            <person name="Buck D."/>
            <person name="Reinhardt R."/>
            <person name="Poustka A."/>
            <person name="Rosenthal A."/>
            <person name="Lehrach H."/>
            <person name="Meindl A."/>
            <person name="Minx P.J."/>
            <person name="Hillier L.W."/>
            <person name="Willard H.F."/>
            <person name="Wilson R.K."/>
            <person name="Waterston R.H."/>
            <person name="Rice C.M."/>
            <person name="Vaudin M."/>
            <person name="Coulson A."/>
            <person name="Nelson D.L."/>
            <person name="Weinstock G."/>
            <person name="Sulston J.E."/>
            <person name="Durbin R.M."/>
            <person name="Hubbard T."/>
            <person name="Gibbs R.A."/>
            <person name="Beck S."/>
            <person name="Rogers J."/>
            <person name="Bentley D.R."/>
        </authorList>
    </citation>
    <scope>NUCLEOTIDE SEQUENCE [LARGE SCALE GENOMIC DNA]</scope>
</reference>
<reference key="5">
    <citation type="submission" date="2005-09" db="EMBL/GenBank/DDBJ databases">
        <authorList>
            <person name="Mural R.J."/>
            <person name="Istrail S."/>
            <person name="Sutton G.G."/>
            <person name="Florea L."/>
            <person name="Halpern A.L."/>
            <person name="Mobarry C.M."/>
            <person name="Lippert R."/>
            <person name="Walenz B."/>
            <person name="Shatkay H."/>
            <person name="Dew I."/>
            <person name="Miller J.R."/>
            <person name="Flanigan M.J."/>
            <person name="Edwards N.J."/>
            <person name="Bolanos R."/>
            <person name="Fasulo D."/>
            <person name="Halldorsson B.V."/>
            <person name="Hannenhalli S."/>
            <person name="Turner R."/>
            <person name="Yooseph S."/>
            <person name="Lu F."/>
            <person name="Nusskern D.R."/>
            <person name="Shue B.C."/>
            <person name="Zheng X.H."/>
            <person name="Zhong F."/>
            <person name="Delcher A.L."/>
            <person name="Huson D.H."/>
            <person name="Kravitz S.A."/>
            <person name="Mouchard L."/>
            <person name="Reinert K."/>
            <person name="Remington K.A."/>
            <person name="Clark A.G."/>
            <person name="Waterman M.S."/>
            <person name="Eichler E.E."/>
            <person name="Adams M.D."/>
            <person name="Hunkapiller M.W."/>
            <person name="Myers E.W."/>
            <person name="Venter J.C."/>
        </authorList>
    </citation>
    <scope>NUCLEOTIDE SEQUENCE [LARGE SCALE GENOMIC DNA]</scope>
</reference>
<reference key="6">
    <citation type="journal article" date="2004" name="Genome Res.">
        <title>The status, quality, and expansion of the NIH full-length cDNA project: the Mammalian Gene Collection (MGC).</title>
        <authorList>
            <consortium name="The MGC Project Team"/>
        </authorList>
    </citation>
    <scope>NUCLEOTIDE SEQUENCE [LARGE SCALE MRNA]</scope>
    <source>
        <tissue>Lung</tissue>
    </source>
</reference>
<reference key="7">
    <citation type="journal article" date="2006" name="Cell">
        <title>Global, in vivo, and site-specific phosphorylation dynamics in signaling networks.</title>
        <authorList>
            <person name="Olsen J.V."/>
            <person name="Blagoev B."/>
            <person name="Gnad F."/>
            <person name="Macek B."/>
            <person name="Kumar C."/>
            <person name="Mortensen P."/>
            <person name="Mann M."/>
        </authorList>
    </citation>
    <scope>IDENTIFICATION BY MASS SPECTROMETRY [LARGE SCALE ANALYSIS]</scope>
    <source>
        <tissue>Cervix carcinoma</tissue>
    </source>
</reference>
<reference key="8">
    <citation type="journal article" date="2008" name="Proc. Natl. Acad. Sci. U.S.A.">
        <title>A quantitative atlas of mitotic phosphorylation.</title>
        <authorList>
            <person name="Dephoure N."/>
            <person name="Zhou C."/>
            <person name="Villen J."/>
            <person name="Beausoleil S.A."/>
            <person name="Bakalarski C.E."/>
            <person name="Elledge S.J."/>
            <person name="Gygi S.P."/>
        </authorList>
    </citation>
    <scope>PHOSPHORYLATION [LARGE SCALE ANALYSIS] AT SER-186 AND SER-188</scope>
    <scope>IDENTIFICATION BY MASS SPECTROMETRY [LARGE SCALE ANALYSIS]</scope>
    <source>
        <tissue>Cervix carcinoma</tissue>
    </source>
</reference>
<reference key="9">
    <citation type="journal article" date="2009" name="Anal. Chem.">
        <title>Lys-N and trypsin cover complementary parts of the phosphoproteome in a refined SCX-based approach.</title>
        <authorList>
            <person name="Gauci S."/>
            <person name="Helbig A.O."/>
            <person name="Slijper M."/>
            <person name="Krijgsveld J."/>
            <person name="Heck A.J."/>
            <person name="Mohammed S."/>
        </authorList>
    </citation>
    <scope>IDENTIFICATION BY MASS SPECTROMETRY [LARGE SCALE ANALYSIS]</scope>
</reference>
<reference key="10">
    <citation type="journal article" date="2010" name="Sci. Signal.">
        <title>Quantitative phosphoproteomics reveals widespread full phosphorylation site occupancy during mitosis.</title>
        <authorList>
            <person name="Olsen J.V."/>
            <person name="Vermeulen M."/>
            <person name="Santamaria A."/>
            <person name="Kumar C."/>
            <person name="Miller M.L."/>
            <person name="Jensen L.J."/>
            <person name="Gnad F."/>
            <person name="Cox J."/>
            <person name="Jensen T.S."/>
            <person name="Nigg E.A."/>
            <person name="Brunak S."/>
            <person name="Mann M."/>
        </authorList>
    </citation>
    <scope>PHOSPHORYLATION [LARGE SCALE ANALYSIS] AT SER-188</scope>
    <scope>IDENTIFICATION BY MASS SPECTROMETRY [LARGE SCALE ANALYSIS]</scope>
    <source>
        <tissue>Cervix carcinoma</tissue>
    </source>
</reference>
<reference key="11">
    <citation type="journal article" date="2011" name="Sci. Signal.">
        <title>System-wide temporal characterization of the proteome and phosphoproteome of human embryonic stem cell differentiation.</title>
        <authorList>
            <person name="Rigbolt K.T."/>
            <person name="Prokhorova T.A."/>
            <person name="Akimov V."/>
            <person name="Henningsen J."/>
            <person name="Johansen P.T."/>
            <person name="Kratchmarova I."/>
            <person name="Kassem M."/>
            <person name="Mann M."/>
            <person name="Olsen J.V."/>
            <person name="Blagoev B."/>
        </authorList>
    </citation>
    <scope>IDENTIFICATION BY MASS SPECTROMETRY [LARGE SCALE ANALYSIS]</scope>
</reference>
<reference key="12">
    <citation type="journal article" date="2013" name="J. Proteome Res.">
        <title>Toward a comprehensive characterization of a human cancer cell phosphoproteome.</title>
        <authorList>
            <person name="Zhou H."/>
            <person name="Di Palma S."/>
            <person name="Preisinger C."/>
            <person name="Peng M."/>
            <person name="Polat A.N."/>
            <person name="Heck A.J."/>
            <person name="Mohammed S."/>
        </authorList>
    </citation>
    <scope>PHOSPHORYLATION [LARGE SCALE ANALYSIS] AT SER-188; SER-232; SER-272 AND SER-314</scope>
    <scope>IDENTIFICATION BY MASS SPECTROMETRY [LARGE SCALE ANALYSIS]</scope>
    <source>
        <tissue>Cervix carcinoma</tissue>
        <tissue>Erythroleukemia</tissue>
    </source>
</reference>
<reference key="13">
    <citation type="journal article" date="2014" name="J. Proteomics">
        <title>An enzyme assisted RP-RPLC approach for in-depth analysis of human liver phosphoproteome.</title>
        <authorList>
            <person name="Bian Y."/>
            <person name="Song C."/>
            <person name="Cheng K."/>
            <person name="Dong M."/>
            <person name="Wang F."/>
            <person name="Huang J."/>
            <person name="Sun D."/>
            <person name="Wang L."/>
            <person name="Ye M."/>
            <person name="Zou H."/>
        </authorList>
    </citation>
    <scope>PHOSPHORYLATION [LARGE SCALE ANALYSIS] AT SER-188</scope>
    <scope>IDENTIFICATION BY MASS SPECTROMETRY [LARGE SCALE ANALYSIS]</scope>
    <source>
        <tissue>Liver</tissue>
    </source>
</reference>
<reference key="14">
    <citation type="journal article" date="2017" name="Nat. Struct. Mol. Biol.">
        <title>Site-specific mapping of the human SUMO proteome reveals co-modification with phosphorylation.</title>
        <authorList>
            <person name="Hendriks I.A."/>
            <person name="Lyon D."/>
            <person name="Young C."/>
            <person name="Jensen L.J."/>
            <person name="Vertegaal A.C."/>
            <person name="Nielsen M.L."/>
        </authorList>
    </citation>
    <scope>SUMOYLATION [LARGE SCALE ANALYSIS] AT LYS-8 AND LYS-243</scope>
    <scope>IDENTIFICATION BY MASS SPECTROMETRY [LARGE SCALE ANALYSIS]</scope>
</reference>
<reference evidence="12" key="15">
    <citation type="journal article" date="2018" name="Cell">
        <title>Structure and Conformational Dynamics of the Human Spliceosomal Bact Complex.</title>
        <authorList>
            <person name="Haselbach D."/>
            <person name="Komarov I."/>
            <person name="Agafonov D.E."/>
            <person name="Hartmuth K."/>
            <person name="Graf B."/>
            <person name="Dybkov O."/>
            <person name="Urlaub H."/>
            <person name="Kastner B."/>
            <person name="Luhrmann R."/>
            <person name="Stark H."/>
        </authorList>
    </citation>
    <scope>STRUCTURE BY ELECTRON MICROSCOPY (16.00 ANGSTROMS)</scope>
    <scope>FUNCTION</scope>
    <scope>SUBUNIT</scope>
    <scope>SUBCELLULAR LOCATION</scope>
</reference>
<reference evidence="9 10 11" key="16">
    <citation type="journal article" date="2018" name="Cell Res.">
        <title>Structure of the human activated spliceosome in three conformational states.</title>
        <authorList>
            <person name="Zhang X."/>
            <person name="Yan C."/>
            <person name="Zhan X."/>
            <person name="Li L."/>
            <person name="Lei J."/>
            <person name="Shi Y."/>
        </authorList>
    </citation>
    <scope>STRUCTURE BY ELECTRON MICROSCOPY (4.90 ANGSTROMS)</scope>
    <scope>FUNCTION</scope>
    <scope>SUBUNIT</scope>
    <scope>SUBCELLULAR LOCATION</scope>
</reference>
<reference evidence="13" key="17">
    <citation type="journal article" date="2021" name="Science">
        <title>Structure of the activated human minor spliceosome.</title>
        <authorList>
            <person name="Bai R."/>
            <person name="Wan R."/>
            <person name="Wang L."/>
            <person name="Xu K."/>
            <person name="Zhang Q."/>
            <person name="Lei J."/>
            <person name="Shi Y."/>
        </authorList>
    </citation>
    <scope>STRUCTURE BY ELECTRON MICROSCOPY (2.89 ANGSTROMS)</scope>
    <scope>SUBUNIT</scope>
</reference>
<keyword id="KW-0002">3D-structure</keyword>
<keyword id="KW-1017">Isopeptide bond</keyword>
<keyword id="KW-0507">mRNA processing</keyword>
<keyword id="KW-0508">mRNA splicing</keyword>
<keyword id="KW-0539">Nucleus</keyword>
<keyword id="KW-0597">Phosphoprotein</keyword>
<keyword id="KW-1267">Proteomics identification</keyword>
<keyword id="KW-1185">Reference proteome</keyword>
<keyword id="KW-0694">RNA-binding</keyword>
<keyword id="KW-0747">Spliceosome</keyword>
<keyword id="KW-0832">Ubl conjugation</keyword>
<proteinExistence type="evidence at protein level"/>
<organism>
    <name type="scientific">Homo sapiens</name>
    <name type="common">Human</name>
    <dbReference type="NCBI Taxonomy" id="9606"/>
    <lineage>
        <taxon>Eukaryota</taxon>
        <taxon>Metazoa</taxon>
        <taxon>Chordata</taxon>
        <taxon>Craniata</taxon>
        <taxon>Vertebrata</taxon>
        <taxon>Euteleostomi</taxon>
        <taxon>Mammalia</taxon>
        <taxon>Eutheria</taxon>
        <taxon>Euarchontoglires</taxon>
        <taxon>Primates</taxon>
        <taxon>Haplorrhini</taxon>
        <taxon>Catarrhini</taxon>
        <taxon>Hominidae</taxon>
        <taxon>Homo</taxon>
    </lineage>
</organism>
<evidence type="ECO:0000250" key="1">
    <source>
        <dbReference type="UniProtKB" id="Q8R0F5"/>
    </source>
</evidence>
<evidence type="ECO:0000255" key="2">
    <source>
        <dbReference type="PROSITE-ProRule" id="PRU00176"/>
    </source>
</evidence>
<evidence type="ECO:0000256" key="3">
    <source>
        <dbReference type="SAM" id="MobiDB-lite"/>
    </source>
</evidence>
<evidence type="ECO:0000269" key="4">
    <source>
    </source>
</evidence>
<evidence type="ECO:0000269" key="5">
    <source>
    </source>
</evidence>
<evidence type="ECO:0000269" key="6">
    <source>
    </source>
</evidence>
<evidence type="ECO:0000305" key="7"/>
<evidence type="ECO:0000305" key="8">
    <source>
    </source>
</evidence>
<evidence type="ECO:0007744" key="9">
    <source>
        <dbReference type="PDB" id="5Z56"/>
    </source>
</evidence>
<evidence type="ECO:0007744" key="10">
    <source>
        <dbReference type="PDB" id="5Z57"/>
    </source>
</evidence>
<evidence type="ECO:0007744" key="11">
    <source>
        <dbReference type="PDB" id="5Z58"/>
    </source>
</evidence>
<evidence type="ECO:0007744" key="12">
    <source>
        <dbReference type="PDB" id="6FF4"/>
    </source>
</evidence>
<evidence type="ECO:0007744" key="13">
    <source>
        <dbReference type="PDB" id="7DVQ"/>
    </source>
</evidence>
<evidence type="ECO:0007744" key="14">
    <source>
    </source>
</evidence>
<evidence type="ECO:0007744" key="15">
    <source>
    </source>
</evidence>
<evidence type="ECO:0007744" key="16">
    <source>
    </source>
</evidence>
<evidence type="ECO:0007744" key="17">
    <source>
    </source>
</evidence>
<evidence type="ECO:0007744" key="18">
    <source>
    </source>
</evidence>
<evidence type="ECO:0007829" key="19">
    <source>
        <dbReference type="PDB" id="6FF4"/>
    </source>
</evidence>
<evidence type="ECO:0007829" key="20">
    <source>
        <dbReference type="PDB" id="7DVQ"/>
    </source>
</evidence>
<feature type="chain" id="PRO_0000081897" description="RNA-binding motif protein, X-linked 2">
    <location>
        <begin position="1"/>
        <end position="322"/>
    </location>
</feature>
<feature type="domain" description="RRM" evidence="2">
    <location>
        <begin position="36"/>
        <end position="114"/>
    </location>
</feature>
<feature type="region of interest" description="Disordered" evidence="3">
    <location>
        <begin position="134"/>
        <end position="322"/>
    </location>
</feature>
<feature type="compositionally biased region" description="Basic residues" evidence="3">
    <location>
        <begin position="155"/>
        <end position="171"/>
    </location>
</feature>
<feature type="compositionally biased region" description="Basic and acidic residues" evidence="3">
    <location>
        <begin position="195"/>
        <end position="223"/>
    </location>
</feature>
<feature type="compositionally biased region" description="Basic and acidic residues" evidence="3">
    <location>
        <begin position="240"/>
        <end position="274"/>
    </location>
</feature>
<feature type="compositionally biased region" description="Basic residues" evidence="3">
    <location>
        <begin position="289"/>
        <end position="308"/>
    </location>
</feature>
<feature type="modified residue" description="Phosphothreonine" evidence="1">
    <location>
        <position position="140"/>
    </location>
</feature>
<feature type="modified residue" description="Phosphoserine" evidence="1">
    <location>
        <position position="149"/>
    </location>
</feature>
<feature type="modified residue" description="Phosphoserine" evidence="14">
    <location>
        <position position="186"/>
    </location>
</feature>
<feature type="modified residue" description="Phosphoserine" evidence="14 15 16 17">
    <location>
        <position position="188"/>
    </location>
</feature>
<feature type="modified residue" description="Phosphoserine" evidence="16">
    <location>
        <position position="232"/>
    </location>
</feature>
<feature type="modified residue" description="Phosphoserine" evidence="16">
    <location>
        <position position="272"/>
    </location>
</feature>
<feature type="modified residue" description="Phosphoserine" evidence="16">
    <location>
        <position position="314"/>
    </location>
</feature>
<feature type="cross-link" description="Glycyl lysine isopeptide (Lys-Gly) (interchain with G-Cter in SUMO2)" evidence="18">
    <location>
        <position position="8"/>
    </location>
</feature>
<feature type="cross-link" description="Glycyl lysine isopeptide (Lys-Gly) (interchain with G-Cter in SUMO2)" evidence="18">
    <location>
        <position position="243"/>
    </location>
</feature>
<feature type="sequence variant" id="VAR_033724" description="In dbSNP:rs5977266.">
    <original>R</original>
    <variation>H</variation>
    <location>
        <position position="287"/>
    </location>
</feature>
<feature type="sequence conflict" description="In Ref. 1; AAD34074." evidence="7" ref="1">
    <original>SSDAHSSWYNGRSEGRSYRSRSRSRDKSHRHKRARRSRERESSNPSDRWRH</original>
    <variation>LQMHILAGIMGVLKGVVIEVEVGAEINPIGIKGPDAPGRGVLRIPVTVGVTEDFSCTVDLEIIMFFKCSQIQLGGYYFCI</variation>
    <location>
        <begin position="272"/>
        <end position="322"/>
    </location>
</feature>
<feature type="helix" evidence="20">
    <location>
        <begin position="3"/>
        <end position="20"/>
    </location>
</feature>
<feature type="helix" evidence="20">
    <location>
        <begin position="24"/>
        <end position="26"/>
    </location>
</feature>
<feature type="helix" evidence="20">
    <location>
        <begin position="28"/>
        <end position="32"/>
    </location>
</feature>
<feature type="strand" evidence="20">
    <location>
        <begin position="37"/>
        <end position="42"/>
    </location>
</feature>
<feature type="helix" evidence="20">
    <location>
        <begin position="49"/>
        <end position="56"/>
    </location>
</feature>
<feature type="helix" evidence="20">
    <location>
        <begin position="57"/>
        <end position="59"/>
    </location>
</feature>
<feature type="strand" evidence="20">
    <location>
        <begin position="62"/>
        <end position="69"/>
    </location>
</feature>
<feature type="strand" evidence="20">
    <location>
        <begin position="71"/>
        <end position="73"/>
    </location>
</feature>
<feature type="strand" evidence="20">
    <location>
        <begin position="76"/>
        <end position="87"/>
    </location>
</feature>
<feature type="helix" evidence="20">
    <location>
        <begin position="88"/>
        <end position="97"/>
    </location>
</feature>
<feature type="strand" evidence="19">
    <location>
        <begin position="101"/>
        <end position="106"/>
    </location>
</feature>
<feature type="strand" evidence="20">
    <location>
        <begin position="108"/>
        <end position="114"/>
    </location>
</feature>
<feature type="helix" evidence="20">
    <location>
        <begin position="127"/>
        <end position="133"/>
    </location>
</feature>
<dbReference type="EMBL" id="AF151837">
    <property type="protein sequence ID" value="AAD34074.1"/>
    <property type="molecule type" value="mRNA"/>
</dbReference>
<dbReference type="EMBL" id="AL050405">
    <property type="protein sequence ID" value="CAB43745.1"/>
    <property type="molecule type" value="mRNA"/>
</dbReference>
<dbReference type="EMBL" id="AK292855">
    <property type="protein sequence ID" value="BAF85544.1"/>
    <property type="molecule type" value="mRNA"/>
</dbReference>
<dbReference type="EMBL" id="AL035423">
    <property type="status" value="NOT_ANNOTATED_CDS"/>
    <property type="molecule type" value="Genomic_DNA"/>
</dbReference>
<dbReference type="EMBL" id="CH471107">
    <property type="protein sequence ID" value="EAX11800.1"/>
    <property type="molecule type" value="Genomic_DNA"/>
</dbReference>
<dbReference type="EMBL" id="BC033750">
    <property type="protein sequence ID" value="AAH33750.1"/>
    <property type="molecule type" value="mRNA"/>
</dbReference>
<dbReference type="CCDS" id="CCDS43993.1"/>
<dbReference type="RefSeq" id="NP_057108.2">
    <property type="nucleotide sequence ID" value="NM_016024.4"/>
</dbReference>
<dbReference type="PDB" id="5Z56">
    <property type="method" value="EM"/>
    <property type="resolution" value="5.10 A"/>
    <property type="chains" value="Y=1-322"/>
</dbReference>
<dbReference type="PDB" id="5Z57">
    <property type="method" value="EM"/>
    <property type="resolution" value="6.50 A"/>
    <property type="chains" value="Y=1-322"/>
</dbReference>
<dbReference type="PDB" id="5Z58">
    <property type="method" value="EM"/>
    <property type="resolution" value="4.90 A"/>
    <property type="chains" value="Y=1-322"/>
</dbReference>
<dbReference type="PDB" id="6FF4">
    <property type="method" value="EM"/>
    <property type="resolution" value="16.00 A"/>
    <property type="chains" value="1=1-322"/>
</dbReference>
<dbReference type="PDB" id="6FF7">
    <property type="method" value="EM"/>
    <property type="resolution" value="4.50 A"/>
    <property type="chains" value="1=1-322"/>
</dbReference>
<dbReference type="PDB" id="7ABH">
    <property type="method" value="EM"/>
    <property type="resolution" value="4.50 A"/>
    <property type="chains" value="1=1-322"/>
</dbReference>
<dbReference type="PDB" id="7ABI">
    <property type="method" value="EM"/>
    <property type="resolution" value="8.00 A"/>
    <property type="chains" value="1=1-322"/>
</dbReference>
<dbReference type="PDB" id="7DVQ">
    <property type="method" value="EM"/>
    <property type="resolution" value="2.89 A"/>
    <property type="chains" value="Y=1-322"/>
</dbReference>
<dbReference type="PDB" id="8I0P">
    <property type="method" value="EM"/>
    <property type="resolution" value="3.40 A"/>
    <property type="chains" value="Y=1-322"/>
</dbReference>
<dbReference type="PDB" id="8I0R">
    <property type="method" value="EM"/>
    <property type="resolution" value="3.00 A"/>
    <property type="chains" value="Y=1-322"/>
</dbReference>
<dbReference type="PDBsum" id="5Z56"/>
<dbReference type="PDBsum" id="5Z57"/>
<dbReference type="PDBsum" id="5Z58"/>
<dbReference type="PDBsum" id="6FF4"/>
<dbReference type="PDBsum" id="6FF7"/>
<dbReference type="PDBsum" id="7ABH"/>
<dbReference type="PDBsum" id="7ABI"/>
<dbReference type="PDBsum" id="7DVQ"/>
<dbReference type="PDBsum" id="8I0P"/>
<dbReference type="PDBsum" id="8I0R"/>
<dbReference type="EMDB" id="EMD-11696"/>
<dbReference type="EMDB" id="EMD-11697"/>
<dbReference type="EMDB" id="EMD-30875"/>
<dbReference type="EMDB" id="EMD-35105"/>
<dbReference type="EMDB" id="EMD-35107"/>
<dbReference type="EMDB" id="EMD-4255"/>
<dbReference type="EMDB" id="EMD-6889"/>
<dbReference type="EMDB" id="EMD-6890"/>
<dbReference type="EMDB" id="EMD-6891"/>
<dbReference type="SMR" id="Q9Y388"/>
<dbReference type="BioGRID" id="119648">
    <property type="interactions" value="107"/>
</dbReference>
<dbReference type="ComplexPortal" id="CPX-2539">
    <property type="entry name" value="U2 small nuclear ribonucleoprotein complex"/>
</dbReference>
<dbReference type="FunCoup" id="Q9Y388">
    <property type="interactions" value="1061"/>
</dbReference>
<dbReference type="IntAct" id="Q9Y388">
    <property type="interactions" value="94"/>
</dbReference>
<dbReference type="MINT" id="Q9Y388"/>
<dbReference type="STRING" id="9606.ENSP00000339090"/>
<dbReference type="GlyGen" id="Q9Y388">
    <property type="glycosylation" value="1 site, 1 O-linked glycan (1 site)"/>
</dbReference>
<dbReference type="iPTMnet" id="Q9Y388"/>
<dbReference type="PhosphoSitePlus" id="Q9Y388"/>
<dbReference type="BioMuta" id="RBMX2"/>
<dbReference type="DMDM" id="62512110"/>
<dbReference type="jPOST" id="Q9Y388"/>
<dbReference type="MassIVE" id="Q9Y388"/>
<dbReference type="PaxDb" id="9606-ENSP00000339090"/>
<dbReference type="PeptideAtlas" id="Q9Y388"/>
<dbReference type="ProteomicsDB" id="85985"/>
<dbReference type="Pumba" id="Q9Y388"/>
<dbReference type="Antibodypedia" id="6828">
    <property type="antibodies" value="118 antibodies from 22 providers"/>
</dbReference>
<dbReference type="DNASU" id="51634"/>
<dbReference type="Ensembl" id="ENST00000305536.11">
    <property type="protein sequence ID" value="ENSP00000339090.4"/>
    <property type="gene ID" value="ENSG00000134597.17"/>
</dbReference>
<dbReference type="GeneID" id="51634"/>
<dbReference type="KEGG" id="hsa:51634"/>
<dbReference type="MANE-Select" id="ENST00000305536.11">
    <property type="protein sequence ID" value="ENSP00000339090.4"/>
    <property type="RefSeq nucleotide sequence ID" value="NM_016024.4"/>
    <property type="RefSeq protein sequence ID" value="NP_057108.2"/>
</dbReference>
<dbReference type="UCSC" id="uc004evt.3">
    <property type="organism name" value="human"/>
</dbReference>
<dbReference type="AGR" id="HGNC:24282"/>
<dbReference type="CTD" id="51634"/>
<dbReference type="GeneCards" id="RBMX2"/>
<dbReference type="HGNC" id="HGNC:24282">
    <property type="gene designation" value="RBMX2"/>
</dbReference>
<dbReference type="HPA" id="ENSG00000134597">
    <property type="expression patterns" value="Low tissue specificity"/>
</dbReference>
<dbReference type="neXtProt" id="NX_Q9Y388"/>
<dbReference type="OpenTargets" id="ENSG00000134597"/>
<dbReference type="PharmGKB" id="PA134872051"/>
<dbReference type="VEuPathDB" id="HostDB:ENSG00000134597"/>
<dbReference type="eggNOG" id="KOG0126">
    <property type="taxonomic scope" value="Eukaryota"/>
</dbReference>
<dbReference type="GeneTree" id="ENSGT00890000139472"/>
<dbReference type="InParanoid" id="Q9Y388"/>
<dbReference type="OMA" id="GSWHVDY"/>
<dbReference type="OrthoDB" id="2573941at2759"/>
<dbReference type="PAN-GO" id="Q9Y388">
    <property type="GO annotations" value="3 GO annotations based on evolutionary models"/>
</dbReference>
<dbReference type="PhylomeDB" id="Q9Y388"/>
<dbReference type="TreeFam" id="TF313727"/>
<dbReference type="PathwayCommons" id="Q9Y388"/>
<dbReference type="Reactome" id="R-HSA-72163">
    <property type="pathway name" value="mRNA Splicing - Major Pathway"/>
</dbReference>
<dbReference type="SignaLink" id="Q9Y388"/>
<dbReference type="SIGNOR" id="Q9Y388"/>
<dbReference type="BioGRID-ORCS" id="51634">
    <property type="hits" value="305 hits in 776 CRISPR screens"/>
</dbReference>
<dbReference type="ChiTaRS" id="RBMX2">
    <property type="organism name" value="human"/>
</dbReference>
<dbReference type="GenomeRNAi" id="51634"/>
<dbReference type="Pharos" id="Q9Y388">
    <property type="development level" value="Tbio"/>
</dbReference>
<dbReference type="PRO" id="PR:Q9Y388"/>
<dbReference type="Proteomes" id="UP000005640">
    <property type="component" value="Chromosome X"/>
</dbReference>
<dbReference type="RNAct" id="Q9Y388">
    <property type="molecule type" value="protein"/>
</dbReference>
<dbReference type="Bgee" id="ENSG00000134597">
    <property type="expression patterns" value="Expressed in secondary oocyte and 188 other cell types or tissues"/>
</dbReference>
<dbReference type="ExpressionAtlas" id="Q9Y388">
    <property type="expression patterns" value="baseline and differential"/>
</dbReference>
<dbReference type="GO" id="GO:0005783">
    <property type="term" value="C:endoplasmic reticulum"/>
    <property type="evidence" value="ECO:0000314"/>
    <property type="project" value="HPA"/>
</dbReference>
<dbReference type="GO" id="GO:0031965">
    <property type="term" value="C:nuclear membrane"/>
    <property type="evidence" value="ECO:0000314"/>
    <property type="project" value="HPA"/>
</dbReference>
<dbReference type="GO" id="GO:0005730">
    <property type="term" value="C:nucleolus"/>
    <property type="evidence" value="ECO:0000314"/>
    <property type="project" value="HPA"/>
</dbReference>
<dbReference type="GO" id="GO:0005654">
    <property type="term" value="C:nucleoplasm"/>
    <property type="evidence" value="ECO:0000304"/>
    <property type="project" value="Reactome"/>
</dbReference>
<dbReference type="GO" id="GO:0005634">
    <property type="term" value="C:nucleus"/>
    <property type="evidence" value="ECO:0000314"/>
    <property type="project" value="UniProtKB"/>
</dbReference>
<dbReference type="GO" id="GO:0071011">
    <property type="term" value="C:precatalytic spliceosome"/>
    <property type="evidence" value="ECO:0000318"/>
    <property type="project" value="GO_Central"/>
</dbReference>
<dbReference type="GO" id="GO:0005681">
    <property type="term" value="C:spliceosomal complex"/>
    <property type="evidence" value="ECO:0000303"/>
    <property type="project" value="ComplexPortal"/>
</dbReference>
<dbReference type="GO" id="GO:0005686">
    <property type="term" value="C:U2 snRNP"/>
    <property type="evidence" value="ECO:0000318"/>
    <property type="project" value="GO_Central"/>
</dbReference>
<dbReference type="GO" id="GO:0071005">
    <property type="term" value="C:U2-type precatalytic spliceosome"/>
    <property type="evidence" value="ECO:0000314"/>
    <property type="project" value="UniProtKB"/>
</dbReference>
<dbReference type="GO" id="GO:0003723">
    <property type="term" value="F:RNA binding"/>
    <property type="evidence" value="ECO:0007005"/>
    <property type="project" value="UniProtKB"/>
</dbReference>
<dbReference type="GO" id="GO:0000398">
    <property type="term" value="P:mRNA splicing, via spliceosome"/>
    <property type="evidence" value="ECO:0000314"/>
    <property type="project" value="UniProtKB"/>
</dbReference>
<dbReference type="GO" id="GO:1903241">
    <property type="term" value="P:U2-type prespliceosome assembly"/>
    <property type="evidence" value="ECO:0000303"/>
    <property type="project" value="ComplexPortal"/>
</dbReference>
<dbReference type="CDD" id="cd12411">
    <property type="entry name" value="RRM_ist3_like"/>
    <property type="match status" value="1"/>
</dbReference>
<dbReference type="FunFam" id="3.30.70.330:FF:000218">
    <property type="entry name" value="RNA-binding motif protein, X-linked 2"/>
    <property type="match status" value="1"/>
</dbReference>
<dbReference type="Gene3D" id="3.30.70.330">
    <property type="match status" value="1"/>
</dbReference>
<dbReference type="InterPro" id="IPR012677">
    <property type="entry name" value="Nucleotide-bd_a/b_plait_sf"/>
</dbReference>
<dbReference type="InterPro" id="IPR035979">
    <property type="entry name" value="RBD_domain_sf"/>
</dbReference>
<dbReference type="InterPro" id="IPR051847">
    <property type="entry name" value="RNA_proc/Spliceosome_comp"/>
</dbReference>
<dbReference type="InterPro" id="IPR000504">
    <property type="entry name" value="RRM_dom"/>
</dbReference>
<dbReference type="InterPro" id="IPR045844">
    <property type="entry name" value="RRM_Ist3-like"/>
</dbReference>
<dbReference type="PANTHER" id="PTHR45880">
    <property type="entry name" value="RNA-BINDING MOTIF PROTEIN, X-LINKED 2"/>
    <property type="match status" value="1"/>
</dbReference>
<dbReference type="PANTHER" id="PTHR45880:SF4">
    <property type="entry name" value="RNA-BINDING MOTIF PROTEIN, X-LINKED 2"/>
    <property type="match status" value="1"/>
</dbReference>
<dbReference type="Pfam" id="PF00076">
    <property type="entry name" value="RRM_1"/>
    <property type="match status" value="1"/>
</dbReference>
<dbReference type="SMART" id="SM00360">
    <property type="entry name" value="RRM"/>
    <property type="match status" value="1"/>
</dbReference>
<dbReference type="SUPFAM" id="SSF54928">
    <property type="entry name" value="RNA-binding domain, RBD"/>
    <property type="match status" value="1"/>
</dbReference>
<dbReference type="PROSITE" id="PS50102">
    <property type="entry name" value="RRM"/>
    <property type="match status" value="1"/>
</dbReference>